<protein>
    <recommendedName>
        <fullName evidence="1">Methylglyoxal synthase</fullName>
        <shortName evidence="1">MGS</shortName>
        <ecNumber evidence="1">4.2.3.3</ecNumber>
    </recommendedName>
</protein>
<name>MGSA_BURPS</name>
<dbReference type="EC" id="4.2.3.3" evidence="1"/>
<dbReference type="EMBL" id="BX571965">
    <property type="protein sequence ID" value="CAH35163.1"/>
    <property type="molecule type" value="Genomic_DNA"/>
</dbReference>
<dbReference type="RefSeq" id="WP_004186317.1">
    <property type="nucleotide sequence ID" value="NZ_CP009538.1"/>
</dbReference>
<dbReference type="RefSeq" id="YP_107790.1">
    <property type="nucleotide sequence ID" value="NC_006350.1"/>
</dbReference>
<dbReference type="SMR" id="Q63VS6"/>
<dbReference type="STRING" id="272560.BPSL1168"/>
<dbReference type="KEGG" id="bps:BPSL1168"/>
<dbReference type="PATRIC" id="fig|272560.51.peg.369"/>
<dbReference type="eggNOG" id="COG1803">
    <property type="taxonomic scope" value="Bacteria"/>
</dbReference>
<dbReference type="Proteomes" id="UP000000605">
    <property type="component" value="Chromosome 1"/>
</dbReference>
<dbReference type="GO" id="GO:0005829">
    <property type="term" value="C:cytosol"/>
    <property type="evidence" value="ECO:0007669"/>
    <property type="project" value="TreeGrafter"/>
</dbReference>
<dbReference type="GO" id="GO:0008929">
    <property type="term" value="F:methylglyoxal synthase activity"/>
    <property type="evidence" value="ECO:0007669"/>
    <property type="project" value="UniProtKB-UniRule"/>
</dbReference>
<dbReference type="GO" id="GO:0019242">
    <property type="term" value="P:methylglyoxal biosynthetic process"/>
    <property type="evidence" value="ECO:0007669"/>
    <property type="project" value="UniProtKB-UniRule"/>
</dbReference>
<dbReference type="CDD" id="cd01422">
    <property type="entry name" value="MGS"/>
    <property type="match status" value="1"/>
</dbReference>
<dbReference type="Gene3D" id="3.40.50.1380">
    <property type="entry name" value="Methylglyoxal synthase-like domain"/>
    <property type="match status" value="1"/>
</dbReference>
<dbReference type="HAMAP" id="MF_00549">
    <property type="entry name" value="Methylglyoxal_synth"/>
    <property type="match status" value="1"/>
</dbReference>
<dbReference type="InterPro" id="IPR004363">
    <property type="entry name" value="Methylgl_synth"/>
</dbReference>
<dbReference type="InterPro" id="IPR018148">
    <property type="entry name" value="Methylglyoxal_synth_AS"/>
</dbReference>
<dbReference type="InterPro" id="IPR011607">
    <property type="entry name" value="MGS-like_dom"/>
</dbReference>
<dbReference type="InterPro" id="IPR036914">
    <property type="entry name" value="MGS-like_dom_sf"/>
</dbReference>
<dbReference type="NCBIfam" id="TIGR00160">
    <property type="entry name" value="MGSA"/>
    <property type="match status" value="1"/>
</dbReference>
<dbReference type="NCBIfam" id="NF003559">
    <property type="entry name" value="PRK05234.1"/>
    <property type="match status" value="1"/>
</dbReference>
<dbReference type="PANTHER" id="PTHR30492">
    <property type="entry name" value="METHYLGLYOXAL SYNTHASE"/>
    <property type="match status" value="1"/>
</dbReference>
<dbReference type="PANTHER" id="PTHR30492:SF0">
    <property type="entry name" value="METHYLGLYOXAL SYNTHASE"/>
    <property type="match status" value="1"/>
</dbReference>
<dbReference type="Pfam" id="PF02142">
    <property type="entry name" value="MGS"/>
    <property type="match status" value="1"/>
</dbReference>
<dbReference type="PIRSF" id="PIRSF006614">
    <property type="entry name" value="Methylglyox_syn"/>
    <property type="match status" value="1"/>
</dbReference>
<dbReference type="SMART" id="SM00851">
    <property type="entry name" value="MGS"/>
    <property type="match status" value="1"/>
</dbReference>
<dbReference type="SUPFAM" id="SSF52335">
    <property type="entry name" value="Methylglyoxal synthase-like"/>
    <property type="match status" value="1"/>
</dbReference>
<dbReference type="PROSITE" id="PS01335">
    <property type="entry name" value="METHYLGLYOXAL_SYNTH"/>
    <property type="match status" value="1"/>
</dbReference>
<dbReference type="PROSITE" id="PS51855">
    <property type="entry name" value="MGS"/>
    <property type="match status" value="1"/>
</dbReference>
<reference key="1">
    <citation type="journal article" date="2004" name="Proc. Natl. Acad. Sci. U.S.A.">
        <title>Genomic plasticity of the causative agent of melioidosis, Burkholderia pseudomallei.</title>
        <authorList>
            <person name="Holden M.T.G."/>
            <person name="Titball R.W."/>
            <person name="Peacock S.J."/>
            <person name="Cerdeno-Tarraga A.-M."/>
            <person name="Atkins T."/>
            <person name="Crossman L.C."/>
            <person name="Pitt T."/>
            <person name="Churcher C."/>
            <person name="Mungall K.L."/>
            <person name="Bentley S.D."/>
            <person name="Sebaihia M."/>
            <person name="Thomson N.R."/>
            <person name="Bason N."/>
            <person name="Beacham I.R."/>
            <person name="Brooks K."/>
            <person name="Brown K.A."/>
            <person name="Brown N.F."/>
            <person name="Challis G.L."/>
            <person name="Cherevach I."/>
            <person name="Chillingworth T."/>
            <person name="Cronin A."/>
            <person name="Crossett B."/>
            <person name="Davis P."/>
            <person name="DeShazer D."/>
            <person name="Feltwell T."/>
            <person name="Fraser A."/>
            <person name="Hance Z."/>
            <person name="Hauser H."/>
            <person name="Holroyd S."/>
            <person name="Jagels K."/>
            <person name="Keith K.E."/>
            <person name="Maddison M."/>
            <person name="Moule S."/>
            <person name="Price C."/>
            <person name="Quail M.A."/>
            <person name="Rabbinowitsch E."/>
            <person name="Rutherford K."/>
            <person name="Sanders M."/>
            <person name="Simmonds M."/>
            <person name="Songsivilai S."/>
            <person name="Stevens K."/>
            <person name="Tumapa S."/>
            <person name="Vesaratchavest M."/>
            <person name="Whitehead S."/>
            <person name="Yeats C."/>
            <person name="Barrell B.G."/>
            <person name="Oyston P.C.F."/>
            <person name="Parkhill J."/>
        </authorList>
    </citation>
    <scope>NUCLEOTIDE SEQUENCE [LARGE SCALE GENOMIC DNA]</scope>
    <source>
        <strain>K96243</strain>
    </source>
</reference>
<keyword id="KW-0456">Lyase</keyword>
<keyword id="KW-1185">Reference proteome</keyword>
<sequence>MSTPRIALIAHDAKKDDIVALAGAYRATLAQCRLVATGTTGGRIAQAHGLDVERKLSGPLGGDLQIGAELADGRVDIVIFLRDPMTAQPHDPDITALVRACDVHDVPVATNVATARVLLDDLARRLTANA</sequence>
<accession>Q63VS6</accession>
<organism>
    <name type="scientific">Burkholderia pseudomallei (strain K96243)</name>
    <dbReference type="NCBI Taxonomy" id="272560"/>
    <lineage>
        <taxon>Bacteria</taxon>
        <taxon>Pseudomonadati</taxon>
        <taxon>Pseudomonadota</taxon>
        <taxon>Betaproteobacteria</taxon>
        <taxon>Burkholderiales</taxon>
        <taxon>Burkholderiaceae</taxon>
        <taxon>Burkholderia</taxon>
        <taxon>pseudomallei group</taxon>
    </lineage>
</organism>
<feature type="chain" id="PRO_0000178620" description="Methylglyoxal synthase">
    <location>
        <begin position="1"/>
        <end position="130"/>
    </location>
</feature>
<feature type="domain" description="MGS-like" evidence="1">
    <location>
        <begin position="1"/>
        <end position="130"/>
    </location>
</feature>
<feature type="active site" description="Proton donor/acceptor" evidence="1">
    <location>
        <position position="63"/>
    </location>
</feature>
<feature type="binding site" evidence="1">
    <location>
        <position position="11"/>
    </location>
    <ligand>
        <name>substrate</name>
    </ligand>
</feature>
<feature type="binding site" evidence="1">
    <location>
        <position position="15"/>
    </location>
    <ligand>
        <name>substrate</name>
    </ligand>
</feature>
<feature type="binding site" evidence="1">
    <location>
        <begin position="37"/>
        <end position="40"/>
    </location>
    <ligand>
        <name>substrate</name>
    </ligand>
</feature>
<feature type="binding site" evidence="1">
    <location>
        <begin position="57"/>
        <end position="58"/>
    </location>
    <ligand>
        <name>substrate</name>
    </ligand>
</feature>
<feature type="binding site" evidence="1">
    <location>
        <position position="90"/>
    </location>
    <ligand>
        <name>substrate</name>
    </ligand>
</feature>
<comment type="function">
    <text evidence="1">Catalyzes the formation of methylglyoxal from dihydroxyacetone phosphate.</text>
</comment>
<comment type="catalytic activity">
    <reaction evidence="1">
        <text>dihydroxyacetone phosphate = methylglyoxal + phosphate</text>
        <dbReference type="Rhea" id="RHEA:17937"/>
        <dbReference type="ChEBI" id="CHEBI:17158"/>
        <dbReference type="ChEBI" id="CHEBI:43474"/>
        <dbReference type="ChEBI" id="CHEBI:57642"/>
        <dbReference type="EC" id="4.2.3.3"/>
    </reaction>
</comment>
<comment type="similarity">
    <text evidence="1">Belongs to the methylglyoxal synthase family.</text>
</comment>
<evidence type="ECO:0000255" key="1">
    <source>
        <dbReference type="HAMAP-Rule" id="MF_00549"/>
    </source>
</evidence>
<proteinExistence type="inferred from homology"/>
<gene>
    <name evidence="1" type="primary">mgsA</name>
    <name type="ordered locus">BPSL1168</name>
</gene>